<proteinExistence type="evidence at transcript level"/>
<name>FDL20_ARATH</name>
<feature type="chain" id="PRO_0000283113" description="F-box/FBD/LRR-repeat protein At3g51530">
    <location>
        <begin position="1"/>
        <end position="455"/>
    </location>
</feature>
<feature type="domain" description="F-box" evidence="1">
    <location>
        <begin position="29"/>
        <end position="75"/>
    </location>
</feature>
<feature type="repeat" description="LRR 1">
    <location>
        <begin position="80"/>
        <end position="106"/>
    </location>
</feature>
<feature type="repeat" description="LRR 2">
    <location>
        <begin position="155"/>
        <end position="182"/>
    </location>
</feature>
<feature type="repeat" description="LRR 3">
    <location>
        <begin position="183"/>
        <end position="208"/>
    </location>
</feature>
<feature type="repeat" description="LRR 4">
    <location>
        <begin position="227"/>
        <end position="257"/>
    </location>
</feature>
<feature type="repeat" description="LRR 5">
    <location>
        <begin position="277"/>
        <end position="302"/>
    </location>
</feature>
<feature type="repeat" description="LRR 6">
    <location>
        <begin position="325"/>
        <end position="351"/>
    </location>
</feature>
<feature type="domain" description="FBD">
    <location>
        <begin position="370"/>
        <end position="417"/>
    </location>
</feature>
<feature type="region of interest" description="Disordered" evidence="2">
    <location>
        <begin position="1"/>
        <end position="26"/>
    </location>
</feature>
<organism>
    <name type="scientific">Arabidopsis thaliana</name>
    <name type="common">Mouse-ear cress</name>
    <dbReference type="NCBI Taxonomy" id="3702"/>
    <lineage>
        <taxon>Eukaryota</taxon>
        <taxon>Viridiplantae</taxon>
        <taxon>Streptophyta</taxon>
        <taxon>Embryophyta</taxon>
        <taxon>Tracheophyta</taxon>
        <taxon>Spermatophyta</taxon>
        <taxon>Magnoliopsida</taxon>
        <taxon>eudicotyledons</taxon>
        <taxon>Gunneridae</taxon>
        <taxon>Pentapetalae</taxon>
        <taxon>rosids</taxon>
        <taxon>malvids</taxon>
        <taxon>Brassicales</taxon>
        <taxon>Brassicaceae</taxon>
        <taxon>Camelineae</taxon>
        <taxon>Arabidopsis</taxon>
    </lineage>
</organism>
<protein>
    <recommendedName>
        <fullName>F-box/FBD/LRR-repeat protein At3g51530</fullName>
    </recommendedName>
</protein>
<comment type="sequence caution" evidence="3">
    <conflict type="erroneous gene model prediction">
        <sequence resource="EMBL-CDS" id="CAB63017"/>
    </conflict>
</comment>
<accession>Q501E9</accession>
<accession>Q9SCZ6</accession>
<dbReference type="EMBL" id="AL133452">
    <property type="protein sequence ID" value="CAB63017.1"/>
    <property type="status" value="ALT_SEQ"/>
    <property type="molecule type" value="Genomic_DNA"/>
</dbReference>
<dbReference type="EMBL" id="CP002686">
    <property type="protein sequence ID" value="AEE78803.1"/>
    <property type="molecule type" value="Genomic_DNA"/>
</dbReference>
<dbReference type="EMBL" id="AK229740">
    <property type="protein sequence ID" value="BAF01577.1"/>
    <property type="molecule type" value="mRNA"/>
</dbReference>
<dbReference type="EMBL" id="BT022018">
    <property type="protein sequence ID" value="AAY25430.1"/>
    <property type="molecule type" value="mRNA"/>
</dbReference>
<dbReference type="EMBL" id="BT029216">
    <property type="protein sequence ID" value="ABJ17151.1"/>
    <property type="molecule type" value="mRNA"/>
</dbReference>
<dbReference type="PIR" id="T45784">
    <property type="entry name" value="T45784"/>
</dbReference>
<dbReference type="RefSeq" id="NP_190721.3">
    <property type="nucleotide sequence ID" value="NM_115012.4"/>
</dbReference>
<dbReference type="FunCoup" id="Q501E9">
    <property type="interactions" value="356"/>
</dbReference>
<dbReference type="PaxDb" id="3702-AT3G51530.1"/>
<dbReference type="ProteomicsDB" id="231003"/>
<dbReference type="EnsemblPlants" id="AT3G51530.1">
    <property type="protein sequence ID" value="AT3G51530.1"/>
    <property type="gene ID" value="AT3G51530"/>
</dbReference>
<dbReference type="GeneID" id="824316"/>
<dbReference type="Gramene" id="AT3G51530.1">
    <property type="protein sequence ID" value="AT3G51530.1"/>
    <property type="gene ID" value="AT3G51530"/>
</dbReference>
<dbReference type="KEGG" id="ath:AT3G51530"/>
<dbReference type="Araport" id="AT3G51530"/>
<dbReference type="TAIR" id="AT3G51530"/>
<dbReference type="HOGENOM" id="CLU_010721_1_2_1"/>
<dbReference type="InParanoid" id="Q501E9"/>
<dbReference type="OMA" id="VRFPSCL"/>
<dbReference type="PhylomeDB" id="Q501E9"/>
<dbReference type="PRO" id="PR:Q501E9"/>
<dbReference type="Proteomes" id="UP000006548">
    <property type="component" value="Chromosome 3"/>
</dbReference>
<dbReference type="ExpressionAtlas" id="Q501E9">
    <property type="expression patterns" value="baseline and differential"/>
</dbReference>
<dbReference type="CDD" id="cd22160">
    <property type="entry name" value="F-box_AtFBL13-like"/>
    <property type="match status" value="1"/>
</dbReference>
<dbReference type="Gene3D" id="1.20.1280.50">
    <property type="match status" value="1"/>
</dbReference>
<dbReference type="Gene3D" id="3.80.10.10">
    <property type="entry name" value="Ribonuclease Inhibitor"/>
    <property type="match status" value="1"/>
</dbReference>
<dbReference type="InterPro" id="IPR036047">
    <property type="entry name" value="F-box-like_dom_sf"/>
</dbReference>
<dbReference type="InterPro" id="IPR053781">
    <property type="entry name" value="F-box_AtFBL13-like"/>
</dbReference>
<dbReference type="InterPro" id="IPR001810">
    <property type="entry name" value="F-box_dom"/>
</dbReference>
<dbReference type="InterPro" id="IPR006566">
    <property type="entry name" value="FBD"/>
</dbReference>
<dbReference type="InterPro" id="IPR050232">
    <property type="entry name" value="FBL13/AtMIF1-like"/>
</dbReference>
<dbReference type="InterPro" id="IPR032675">
    <property type="entry name" value="LRR_dom_sf"/>
</dbReference>
<dbReference type="InterPro" id="IPR055411">
    <property type="entry name" value="LRR_FXL15/At3g58940/PEG3-like"/>
</dbReference>
<dbReference type="PANTHER" id="PTHR31900:SF34">
    <property type="entry name" value="EMB|CAB62440.1-RELATED"/>
    <property type="match status" value="1"/>
</dbReference>
<dbReference type="PANTHER" id="PTHR31900">
    <property type="entry name" value="F-BOX/RNI SUPERFAMILY PROTEIN-RELATED"/>
    <property type="match status" value="1"/>
</dbReference>
<dbReference type="Pfam" id="PF00646">
    <property type="entry name" value="F-box"/>
    <property type="match status" value="1"/>
</dbReference>
<dbReference type="Pfam" id="PF08387">
    <property type="entry name" value="FBD"/>
    <property type="match status" value="1"/>
</dbReference>
<dbReference type="Pfam" id="PF24758">
    <property type="entry name" value="LRR_At5g56370"/>
    <property type="match status" value="1"/>
</dbReference>
<dbReference type="SMART" id="SM00579">
    <property type="entry name" value="FBD"/>
    <property type="match status" value="1"/>
</dbReference>
<dbReference type="SUPFAM" id="SSF81383">
    <property type="entry name" value="F-box domain"/>
    <property type="match status" value="1"/>
</dbReference>
<dbReference type="SUPFAM" id="SSF52047">
    <property type="entry name" value="RNI-like"/>
    <property type="match status" value="1"/>
</dbReference>
<dbReference type="PROSITE" id="PS50181">
    <property type="entry name" value="FBOX"/>
    <property type="match status" value="1"/>
</dbReference>
<gene>
    <name type="ordered locus">At3g51530</name>
    <name type="ORF">F26O13.170</name>
</gene>
<keyword id="KW-0433">Leucine-rich repeat</keyword>
<keyword id="KW-1185">Reference proteome</keyword>
<keyword id="KW-0677">Repeat</keyword>
<sequence length="455" mass="52751">MKNSERFSAAKPLMEQGGKSSRKPGFMSEDRISELPEVLLLQILSSLPTKLVISTSVLSKRWLSLWKMVQRLEFESSRNIYDFAENVTRSLLSHKAPVLESLHLKVGDQFDGVYVGVWATIAFTRHVREFVLDLSSYHGPRVRFPTSLFCFDTLETLKLDYVYIYVPCPVSMKSLRTLHLLSVVYKGDESGHNLFASCPNLEHLVLRRGFFFDAVVNFIIDAPSLKTLLLSDPFSARESSRGYVIKAPSLKYLGIESVEGFEYFLIENVTELVEANIRNVSKIVNENILGSLKSAKRLSLDLSPLKITYPTEVMYHQLVYLEMHTHKVEWWNLLTHMLDSSPKLQVLKLIDRETRHENLEFDKKYKDQGKWNQPKYVPECLETFMWRNCNWGREEEKEVATYILRNARQLKKATFSTDPIEAKRLCKLAKRRKMREELDGVVMTSNSCHLVFEFE</sequence>
<reference key="1">
    <citation type="journal article" date="2000" name="Nature">
        <title>Sequence and analysis of chromosome 3 of the plant Arabidopsis thaliana.</title>
        <authorList>
            <person name="Salanoubat M."/>
            <person name="Lemcke K."/>
            <person name="Rieger M."/>
            <person name="Ansorge W."/>
            <person name="Unseld M."/>
            <person name="Fartmann B."/>
            <person name="Valle G."/>
            <person name="Bloecker H."/>
            <person name="Perez-Alonso M."/>
            <person name="Obermaier B."/>
            <person name="Delseny M."/>
            <person name="Boutry M."/>
            <person name="Grivell L.A."/>
            <person name="Mache R."/>
            <person name="Puigdomenech P."/>
            <person name="De Simone V."/>
            <person name="Choisne N."/>
            <person name="Artiguenave F."/>
            <person name="Robert C."/>
            <person name="Brottier P."/>
            <person name="Wincker P."/>
            <person name="Cattolico L."/>
            <person name="Weissenbach J."/>
            <person name="Saurin W."/>
            <person name="Quetier F."/>
            <person name="Schaefer M."/>
            <person name="Mueller-Auer S."/>
            <person name="Gabel C."/>
            <person name="Fuchs M."/>
            <person name="Benes V."/>
            <person name="Wurmbach E."/>
            <person name="Drzonek H."/>
            <person name="Erfle H."/>
            <person name="Jordan N."/>
            <person name="Bangert S."/>
            <person name="Wiedelmann R."/>
            <person name="Kranz H."/>
            <person name="Voss H."/>
            <person name="Holland R."/>
            <person name="Brandt P."/>
            <person name="Nyakatura G."/>
            <person name="Vezzi A."/>
            <person name="D'Angelo M."/>
            <person name="Pallavicini A."/>
            <person name="Toppo S."/>
            <person name="Simionati B."/>
            <person name="Conrad A."/>
            <person name="Hornischer K."/>
            <person name="Kauer G."/>
            <person name="Loehnert T.-H."/>
            <person name="Nordsiek G."/>
            <person name="Reichelt J."/>
            <person name="Scharfe M."/>
            <person name="Schoen O."/>
            <person name="Bargues M."/>
            <person name="Terol J."/>
            <person name="Climent J."/>
            <person name="Navarro P."/>
            <person name="Collado C."/>
            <person name="Perez-Perez A."/>
            <person name="Ottenwaelder B."/>
            <person name="Duchemin D."/>
            <person name="Cooke R."/>
            <person name="Laudie M."/>
            <person name="Berger-Llauro C."/>
            <person name="Purnelle B."/>
            <person name="Masuy D."/>
            <person name="de Haan M."/>
            <person name="Maarse A.C."/>
            <person name="Alcaraz J.-P."/>
            <person name="Cottet A."/>
            <person name="Casacuberta E."/>
            <person name="Monfort A."/>
            <person name="Argiriou A."/>
            <person name="Flores M."/>
            <person name="Liguori R."/>
            <person name="Vitale D."/>
            <person name="Mannhaupt G."/>
            <person name="Haase D."/>
            <person name="Schoof H."/>
            <person name="Rudd S."/>
            <person name="Zaccaria P."/>
            <person name="Mewes H.-W."/>
            <person name="Mayer K.F.X."/>
            <person name="Kaul S."/>
            <person name="Town C.D."/>
            <person name="Koo H.L."/>
            <person name="Tallon L.J."/>
            <person name="Jenkins J."/>
            <person name="Rooney T."/>
            <person name="Rizzo M."/>
            <person name="Walts A."/>
            <person name="Utterback T."/>
            <person name="Fujii C.Y."/>
            <person name="Shea T.P."/>
            <person name="Creasy T.H."/>
            <person name="Haas B."/>
            <person name="Maiti R."/>
            <person name="Wu D."/>
            <person name="Peterson J."/>
            <person name="Van Aken S."/>
            <person name="Pai G."/>
            <person name="Militscher J."/>
            <person name="Sellers P."/>
            <person name="Gill J.E."/>
            <person name="Feldblyum T.V."/>
            <person name="Preuss D."/>
            <person name="Lin X."/>
            <person name="Nierman W.C."/>
            <person name="Salzberg S.L."/>
            <person name="White O."/>
            <person name="Venter J.C."/>
            <person name="Fraser C.M."/>
            <person name="Kaneko T."/>
            <person name="Nakamura Y."/>
            <person name="Sato S."/>
            <person name="Kato T."/>
            <person name="Asamizu E."/>
            <person name="Sasamoto S."/>
            <person name="Kimura T."/>
            <person name="Idesawa K."/>
            <person name="Kawashima K."/>
            <person name="Kishida Y."/>
            <person name="Kiyokawa C."/>
            <person name="Kohara M."/>
            <person name="Matsumoto M."/>
            <person name="Matsuno A."/>
            <person name="Muraki A."/>
            <person name="Nakayama S."/>
            <person name="Nakazaki N."/>
            <person name="Shinpo S."/>
            <person name="Takeuchi C."/>
            <person name="Wada T."/>
            <person name="Watanabe A."/>
            <person name="Yamada M."/>
            <person name="Yasuda M."/>
            <person name="Tabata S."/>
        </authorList>
    </citation>
    <scope>NUCLEOTIDE SEQUENCE [LARGE SCALE GENOMIC DNA]</scope>
    <source>
        <strain>cv. Columbia</strain>
    </source>
</reference>
<reference key="2">
    <citation type="journal article" date="2017" name="Plant J.">
        <title>Araport11: a complete reannotation of the Arabidopsis thaliana reference genome.</title>
        <authorList>
            <person name="Cheng C.Y."/>
            <person name="Krishnakumar V."/>
            <person name="Chan A.P."/>
            <person name="Thibaud-Nissen F."/>
            <person name="Schobel S."/>
            <person name="Town C.D."/>
        </authorList>
    </citation>
    <scope>GENOME REANNOTATION</scope>
    <source>
        <strain>cv. Columbia</strain>
    </source>
</reference>
<reference key="3">
    <citation type="submission" date="2006-07" db="EMBL/GenBank/DDBJ databases">
        <title>Large-scale analysis of RIKEN Arabidopsis full-length (RAFL) cDNAs.</title>
        <authorList>
            <person name="Totoki Y."/>
            <person name="Seki M."/>
            <person name="Ishida J."/>
            <person name="Nakajima M."/>
            <person name="Enju A."/>
            <person name="Kamiya A."/>
            <person name="Narusaka M."/>
            <person name="Shin-i T."/>
            <person name="Nakagawa M."/>
            <person name="Sakamoto N."/>
            <person name="Oishi K."/>
            <person name="Kohara Y."/>
            <person name="Kobayashi M."/>
            <person name="Toyoda A."/>
            <person name="Sakaki Y."/>
            <person name="Sakurai T."/>
            <person name="Iida K."/>
            <person name="Akiyama K."/>
            <person name="Satou M."/>
            <person name="Toyoda T."/>
            <person name="Konagaya A."/>
            <person name="Carninci P."/>
            <person name="Kawai J."/>
            <person name="Hayashizaki Y."/>
            <person name="Shinozaki K."/>
        </authorList>
    </citation>
    <scope>NUCLEOTIDE SEQUENCE [LARGE SCALE MRNA]</scope>
    <source>
        <strain>cv. Columbia</strain>
    </source>
</reference>
<reference key="4">
    <citation type="submission" date="2006-10" db="EMBL/GenBank/DDBJ databases">
        <title>Arabidopsis ORF clones.</title>
        <authorList>
            <person name="Quinitio C."/>
            <person name="Chen H."/>
            <person name="Kim C.J."/>
            <person name="Shinn P."/>
            <person name="Ecker J.R."/>
        </authorList>
    </citation>
    <scope>NUCLEOTIDE SEQUENCE [LARGE SCALE MRNA]</scope>
    <source>
        <strain>cv. Columbia</strain>
    </source>
</reference>
<evidence type="ECO:0000255" key="1">
    <source>
        <dbReference type="PROSITE-ProRule" id="PRU00080"/>
    </source>
</evidence>
<evidence type="ECO:0000256" key="2">
    <source>
        <dbReference type="SAM" id="MobiDB-lite"/>
    </source>
</evidence>
<evidence type="ECO:0000305" key="3"/>